<evidence type="ECO:0000255" key="1">
    <source>
        <dbReference type="HAMAP-Rule" id="MF_00281"/>
    </source>
</evidence>
<accession>B2G885</accession>
<feature type="chain" id="PRO_1000114885" description="Phenylalanine--tRNA ligase alpha subunit">
    <location>
        <begin position="1"/>
        <end position="348"/>
    </location>
</feature>
<feature type="binding site" evidence="1">
    <location>
        <position position="259"/>
    </location>
    <ligand>
        <name>Mg(2+)</name>
        <dbReference type="ChEBI" id="CHEBI:18420"/>
        <note>shared with beta subunit</note>
    </ligand>
</feature>
<protein>
    <recommendedName>
        <fullName evidence="1">Phenylalanine--tRNA ligase alpha subunit</fullName>
        <ecNumber evidence="1">6.1.1.20</ecNumber>
    </recommendedName>
    <alternativeName>
        <fullName evidence="1">Phenylalanyl-tRNA synthetase alpha subunit</fullName>
        <shortName evidence="1">PheRS</shortName>
    </alternativeName>
</protein>
<comment type="catalytic activity">
    <reaction evidence="1">
        <text>tRNA(Phe) + L-phenylalanine + ATP = L-phenylalanyl-tRNA(Phe) + AMP + diphosphate + H(+)</text>
        <dbReference type="Rhea" id="RHEA:19413"/>
        <dbReference type="Rhea" id="RHEA-COMP:9668"/>
        <dbReference type="Rhea" id="RHEA-COMP:9699"/>
        <dbReference type="ChEBI" id="CHEBI:15378"/>
        <dbReference type="ChEBI" id="CHEBI:30616"/>
        <dbReference type="ChEBI" id="CHEBI:33019"/>
        <dbReference type="ChEBI" id="CHEBI:58095"/>
        <dbReference type="ChEBI" id="CHEBI:78442"/>
        <dbReference type="ChEBI" id="CHEBI:78531"/>
        <dbReference type="ChEBI" id="CHEBI:456215"/>
        <dbReference type="EC" id="6.1.1.20"/>
    </reaction>
</comment>
<comment type="cofactor">
    <cofactor evidence="1">
        <name>Mg(2+)</name>
        <dbReference type="ChEBI" id="CHEBI:18420"/>
    </cofactor>
    <text evidence="1">Binds 2 magnesium ions per tetramer.</text>
</comment>
<comment type="subunit">
    <text evidence="1">Tetramer of two alpha and two beta subunits.</text>
</comment>
<comment type="subcellular location">
    <subcellularLocation>
        <location evidence="1">Cytoplasm</location>
    </subcellularLocation>
</comment>
<comment type="similarity">
    <text evidence="1">Belongs to the class-II aminoacyl-tRNA synthetase family. Phe-tRNA synthetase alpha subunit type 1 subfamily.</text>
</comment>
<organism>
    <name type="scientific">Limosilactobacillus reuteri subsp. reuteri (strain JCM 1112)</name>
    <name type="common">Lactobacillus reuteri</name>
    <dbReference type="NCBI Taxonomy" id="557433"/>
    <lineage>
        <taxon>Bacteria</taxon>
        <taxon>Bacillati</taxon>
        <taxon>Bacillota</taxon>
        <taxon>Bacilli</taxon>
        <taxon>Lactobacillales</taxon>
        <taxon>Lactobacillaceae</taxon>
        <taxon>Limosilactobacillus</taxon>
    </lineage>
</organism>
<sequence length="348" mass="39027">MGLREKLAELREEGLQDIKQSEDLKRINEIRVKMLGKKGPITSVLRGMRDLSAEERPKVGQFANKVRDELSAAIEEKRAELEQAAMNAKLAAQTIDVTLPGTPVAQGQPHVIQQIIDQVVDLFVSMGYEVAVGDEVEQEVYNFEKLNLPKDHPARDMQDTFYVTPSVLMRTQTSPMQARMLEKHDFSQGPLKMISPGKVYRRDTDDATHSHQFHQIEGMVVGKNITMADLKGTLEAVAQNLFGDKLKVRLRPSYFPFTEPSVEADITCFNCLGKGCAICKQTGWIEVLGAGMVHPNVLKMSGVDPEEYGGFAFGLGPDRFAMLKYGVDDIRNFYQNDVRFLNQFDQKG</sequence>
<reference key="1">
    <citation type="journal article" date="2008" name="DNA Res.">
        <title>Comparative genome analysis of Lactobacillus reuteri and Lactobacillus fermentum reveal a genomic island for reuterin and cobalamin production.</title>
        <authorList>
            <person name="Morita H."/>
            <person name="Toh H."/>
            <person name="Fukuda S."/>
            <person name="Horikawa H."/>
            <person name="Oshima K."/>
            <person name="Suzuki T."/>
            <person name="Murakami M."/>
            <person name="Hisamatsu S."/>
            <person name="Kato Y."/>
            <person name="Takizawa T."/>
            <person name="Fukuoka H."/>
            <person name="Yoshimura T."/>
            <person name="Itoh K."/>
            <person name="O'Sullivan D.J."/>
            <person name="McKay L.L."/>
            <person name="Ohno H."/>
            <person name="Kikuchi J."/>
            <person name="Masaoka T."/>
            <person name="Hattori M."/>
        </authorList>
    </citation>
    <scope>NUCLEOTIDE SEQUENCE [LARGE SCALE GENOMIC DNA]</scope>
    <source>
        <strain>JCM 1112</strain>
    </source>
</reference>
<proteinExistence type="inferred from homology"/>
<name>SYFA_LIMRJ</name>
<dbReference type="EC" id="6.1.1.20" evidence="1"/>
<dbReference type="EMBL" id="AP007281">
    <property type="protein sequence ID" value="BAG25667.1"/>
    <property type="molecule type" value="Genomic_DNA"/>
</dbReference>
<dbReference type="RefSeq" id="WP_003668455.1">
    <property type="nucleotide sequence ID" value="NC_010609.1"/>
</dbReference>
<dbReference type="SMR" id="B2G885"/>
<dbReference type="KEGG" id="lrf:LAR_1151"/>
<dbReference type="HOGENOM" id="CLU_025086_0_1_9"/>
<dbReference type="GO" id="GO:0005737">
    <property type="term" value="C:cytoplasm"/>
    <property type="evidence" value="ECO:0007669"/>
    <property type="project" value="UniProtKB-SubCell"/>
</dbReference>
<dbReference type="GO" id="GO:0005524">
    <property type="term" value="F:ATP binding"/>
    <property type="evidence" value="ECO:0007669"/>
    <property type="project" value="UniProtKB-UniRule"/>
</dbReference>
<dbReference type="GO" id="GO:0140096">
    <property type="term" value="F:catalytic activity, acting on a protein"/>
    <property type="evidence" value="ECO:0007669"/>
    <property type="project" value="UniProtKB-ARBA"/>
</dbReference>
<dbReference type="GO" id="GO:0000287">
    <property type="term" value="F:magnesium ion binding"/>
    <property type="evidence" value="ECO:0007669"/>
    <property type="project" value="UniProtKB-UniRule"/>
</dbReference>
<dbReference type="GO" id="GO:0004826">
    <property type="term" value="F:phenylalanine-tRNA ligase activity"/>
    <property type="evidence" value="ECO:0007669"/>
    <property type="project" value="UniProtKB-UniRule"/>
</dbReference>
<dbReference type="GO" id="GO:0016740">
    <property type="term" value="F:transferase activity"/>
    <property type="evidence" value="ECO:0007669"/>
    <property type="project" value="UniProtKB-ARBA"/>
</dbReference>
<dbReference type="GO" id="GO:0000049">
    <property type="term" value="F:tRNA binding"/>
    <property type="evidence" value="ECO:0007669"/>
    <property type="project" value="InterPro"/>
</dbReference>
<dbReference type="GO" id="GO:0006432">
    <property type="term" value="P:phenylalanyl-tRNA aminoacylation"/>
    <property type="evidence" value="ECO:0007669"/>
    <property type="project" value="UniProtKB-UniRule"/>
</dbReference>
<dbReference type="CDD" id="cd00496">
    <property type="entry name" value="PheRS_alpha_core"/>
    <property type="match status" value="1"/>
</dbReference>
<dbReference type="FunFam" id="3.30.930.10:FF:000003">
    <property type="entry name" value="Phenylalanine--tRNA ligase alpha subunit"/>
    <property type="match status" value="1"/>
</dbReference>
<dbReference type="Gene3D" id="3.30.930.10">
    <property type="entry name" value="Bira Bifunctional Protein, Domain 2"/>
    <property type="match status" value="1"/>
</dbReference>
<dbReference type="HAMAP" id="MF_00281">
    <property type="entry name" value="Phe_tRNA_synth_alpha1"/>
    <property type="match status" value="1"/>
</dbReference>
<dbReference type="InterPro" id="IPR006195">
    <property type="entry name" value="aa-tRNA-synth_II"/>
</dbReference>
<dbReference type="InterPro" id="IPR045864">
    <property type="entry name" value="aa-tRNA-synth_II/BPL/LPL"/>
</dbReference>
<dbReference type="InterPro" id="IPR004529">
    <property type="entry name" value="Phe-tRNA-synth_IIc_asu"/>
</dbReference>
<dbReference type="InterPro" id="IPR004188">
    <property type="entry name" value="Phe-tRNA_ligase_II_N"/>
</dbReference>
<dbReference type="InterPro" id="IPR022911">
    <property type="entry name" value="Phe_tRNA_ligase_alpha1_bac"/>
</dbReference>
<dbReference type="InterPro" id="IPR002319">
    <property type="entry name" value="Phenylalanyl-tRNA_Synthase"/>
</dbReference>
<dbReference type="InterPro" id="IPR010978">
    <property type="entry name" value="tRNA-bd_arm"/>
</dbReference>
<dbReference type="NCBIfam" id="TIGR00468">
    <property type="entry name" value="pheS"/>
    <property type="match status" value="1"/>
</dbReference>
<dbReference type="PANTHER" id="PTHR11538:SF41">
    <property type="entry name" value="PHENYLALANINE--TRNA LIGASE, MITOCHONDRIAL"/>
    <property type="match status" value="1"/>
</dbReference>
<dbReference type="PANTHER" id="PTHR11538">
    <property type="entry name" value="PHENYLALANYL-TRNA SYNTHETASE"/>
    <property type="match status" value="1"/>
</dbReference>
<dbReference type="Pfam" id="PF02912">
    <property type="entry name" value="Phe_tRNA-synt_N"/>
    <property type="match status" value="1"/>
</dbReference>
<dbReference type="Pfam" id="PF01409">
    <property type="entry name" value="tRNA-synt_2d"/>
    <property type="match status" value="1"/>
</dbReference>
<dbReference type="SUPFAM" id="SSF55681">
    <property type="entry name" value="Class II aaRS and biotin synthetases"/>
    <property type="match status" value="1"/>
</dbReference>
<dbReference type="SUPFAM" id="SSF46589">
    <property type="entry name" value="tRNA-binding arm"/>
    <property type="match status" value="1"/>
</dbReference>
<dbReference type="PROSITE" id="PS50862">
    <property type="entry name" value="AA_TRNA_LIGASE_II"/>
    <property type="match status" value="1"/>
</dbReference>
<keyword id="KW-0030">Aminoacyl-tRNA synthetase</keyword>
<keyword id="KW-0067">ATP-binding</keyword>
<keyword id="KW-0963">Cytoplasm</keyword>
<keyword id="KW-0436">Ligase</keyword>
<keyword id="KW-0460">Magnesium</keyword>
<keyword id="KW-0479">Metal-binding</keyword>
<keyword id="KW-0547">Nucleotide-binding</keyword>
<keyword id="KW-0648">Protein biosynthesis</keyword>
<gene>
    <name evidence="1" type="primary">pheS</name>
    <name type="ordered locus">LAR_1151</name>
</gene>